<name>RK20_NEPOL</name>
<geneLocation type="chloroplast"/>
<keyword id="KW-0150">Chloroplast</keyword>
<keyword id="KW-0934">Plastid</keyword>
<keyword id="KW-0687">Ribonucleoprotein</keyword>
<keyword id="KW-0689">Ribosomal protein</keyword>
<keyword id="KW-0694">RNA-binding</keyword>
<keyword id="KW-0699">rRNA-binding</keyword>
<gene>
    <name evidence="1" type="primary">rpl20</name>
</gene>
<feature type="chain" id="PRO_0000177296" description="Large ribosomal subunit protein bL20c">
    <location>
        <begin position="1"/>
        <end position="113"/>
    </location>
</feature>
<organism>
    <name type="scientific">Nephroselmis olivacea</name>
    <name type="common">Green alga</name>
    <dbReference type="NCBI Taxonomy" id="31312"/>
    <lineage>
        <taxon>Eukaryota</taxon>
        <taxon>Viridiplantae</taxon>
        <taxon>Chlorophyta</taxon>
        <taxon>Nephroselmidophyceae</taxon>
        <taxon>Nephroselmidales</taxon>
        <taxon>Nephroselmidaceae</taxon>
        <taxon>Nephroselmis</taxon>
    </lineage>
</organism>
<sequence>MTRVKRGYVARKRRNKILRANRSFRGTHSKLFRIANQQHMKALRYSYRDRACKKRDFRHLWITRINAVVRSYGLNYSRFMHQLRLGNMVLNRKVLSQLASLDPASFNRLIRAT</sequence>
<reference key="1">
    <citation type="journal article" date="1999" name="Proc. Natl. Acad. Sci. U.S.A.">
        <title>The complete chloroplast DNA sequence of the green alga Nephroselmis olivacea: insights into the architecture of ancestral chloroplast genomes.</title>
        <authorList>
            <person name="Turmel M."/>
            <person name="Otis C."/>
            <person name="Lemieux C."/>
        </authorList>
    </citation>
    <scope>NUCLEOTIDE SEQUENCE [LARGE SCALE GENOMIC DNA]</scope>
    <source>
        <strain>NIES-484 / S-N-5-8</strain>
    </source>
</reference>
<accession>Q9TKX4</accession>
<dbReference type="EMBL" id="AF137379">
    <property type="protein sequence ID" value="AAD54842.1"/>
    <property type="molecule type" value="Genomic_DNA"/>
</dbReference>
<dbReference type="RefSeq" id="NP_050871.1">
    <property type="nucleotide sequence ID" value="NC_000927.1"/>
</dbReference>
<dbReference type="SMR" id="Q9TKX4"/>
<dbReference type="GeneID" id="802014"/>
<dbReference type="GO" id="GO:0009507">
    <property type="term" value="C:chloroplast"/>
    <property type="evidence" value="ECO:0007669"/>
    <property type="project" value="UniProtKB-SubCell"/>
</dbReference>
<dbReference type="GO" id="GO:1990904">
    <property type="term" value="C:ribonucleoprotein complex"/>
    <property type="evidence" value="ECO:0007669"/>
    <property type="project" value="UniProtKB-KW"/>
</dbReference>
<dbReference type="GO" id="GO:0005840">
    <property type="term" value="C:ribosome"/>
    <property type="evidence" value="ECO:0007669"/>
    <property type="project" value="UniProtKB-KW"/>
</dbReference>
<dbReference type="GO" id="GO:0019843">
    <property type="term" value="F:rRNA binding"/>
    <property type="evidence" value="ECO:0007669"/>
    <property type="project" value="UniProtKB-UniRule"/>
</dbReference>
<dbReference type="GO" id="GO:0003735">
    <property type="term" value="F:structural constituent of ribosome"/>
    <property type="evidence" value="ECO:0007669"/>
    <property type="project" value="InterPro"/>
</dbReference>
<dbReference type="GO" id="GO:0000027">
    <property type="term" value="P:ribosomal large subunit assembly"/>
    <property type="evidence" value="ECO:0007669"/>
    <property type="project" value="UniProtKB-UniRule"/>
</dbReference>
<dbReference type="GO" id="GO:0006412">
    <property type="term" value="P:translation"/>
    <property type="evidence" value="ECO:0007669"/>
    <property type="project" value="InterPro"/>
</dbReference>
<dbReference type="CDD" id="cd07026">
    <property type="entry name" value="Ribosomal_L20"/>
    <property type="match status" value="1"/>
</dbReference>
<dbReference type="FunFam" id="1.10.1900.20:FF:000001">
    <property type="entry name" value="50S ribosomal protein L20"/>
    <property type="match status" value="1"/>
</dbReference>
<dbReference type="Gene3D" id="6.10.160.10">
    <property type="match status" value="1"/>
</dbReference>
<dbReference type="Gene3D" id="1.10.1900.20">
    <property type="entry name" value="Ribosomal protein L20"/>
    <property type="match status" value="1"/>
</dbReference>
<dbReference type="HAMAP" id="MF_00382">
    <property type="entry name" value="Ribosomal_bL20"/>
    <property type="match status" value="1"/>
</dbReference>
<dbReference type="InterPro" id="IPR005813">
    <property type="entry name" value="Ribosomal_bL20"/>
</dbReference>
<dbReference type="InterPro" id="IPR049946">
    <property type="entry name" value="RIBOSOMAL_L20_CS"/>
</dbReference>
<dbReference type="InterPro" id="IPR035566">
    <property type="entry name" value="Ribosomal_protein_bL20_C"/>
</dbReference>
<dbReference type="NCBIfam" id="TIGR01032">
    <property type="entry name" value="rplT_bact"/>
    <property type="match status" value="1"/>
</dbReference>
<dbReference type="PANTHER" id="PTHR10986">
    <property type="entry name" value="39S RIBOSOMAL PROTEIN L20"/>
    <property type="match status" value="1"/>
</dbReference>
<dbReference type="Pfam" id="PF00453">
    <property type="entry name" value="Ribosomal_L20"/>
    <property type="match status" value="1"/>
</dbReference>
<dbReference type="PRINTS" id="PR00062">
    <property type="entry name" value="RIBOSOMALL20"/>
</dbReference>
<dbReference type="SUPFAM" id="SSF74731">
    <property type="entry name" value="Ribosomal protein L20"/>
    <property type="match status" value="1"/>
</dbReference>
<dbReference type="PROSITE" id="PS00937">
    <property type="entry name" value="RIBOSOMAL_L20"/>
    <property type="match status" value="1"/>
</dbReference>
<protein>
    <recommendedName>
        <fullName evidence="1">Large ribosomal subunit protein bL20c</fullName>
    </recommendedName>
    <alternativeName>
        <fullName evidence="2">50S ribosomal protein L20, chloroplastic</fullName>
    </alternativeName>
</protein>
<proteinExistence type="inferred from homology"/>
<comment type="function">
    <text evidence="1">Binds directly to 23S ribosomal RNA and is necessary for the in vitro assembly process of the 50S ribosomal subunit. It is not involved in the protein synthesizing functions of that subunit.</text>
</comment>
<comment type="subcellular location">
    <subcellularLocation>
        <location>Plastid</location>
        <location>Chloroplast</location>
    </subcellularLocation>
</comment>
<comment type="similarity">
    <text evidence="1">Belongs to the bacterial ribosomal protein bL20 family.</text>
</comment>
<evidence type="ECO:0000255" key="1">
    <source>
        <dbReference type="HAMAP-Rule" id="MF_00382"/>
    </source>
</evidence>
<evidence type="ECO:0000305" key="2"/>